<proteinExistence type="evidence at protein level"/>
<reference key="1">
    <citation type="submission" date="2003-11" db="EMBL/GenBank/DDBJ databases">
        <title>Cloning of 24b2/STAC2, a novel STAC-homologous gene up-regulated in cerebral ischemia in mice.</title>
        <authorList>
            <person name="Rossner M."/>
            <person name="Faucheron N."/>
            <person name="Wuerz R."/>
            <person name="von Ahsen O."/>
            <person name="Kammandel B."/>
            <person name="Schwaninger M."/>
            <person name="Schneider A."/>
        </authorList>
    </citation>
    <scope>NUCLEOTIDE SEQUENCE [MRNA] (ISOFORM 1)</scope>
    <source>
        <tissue>Brain</tissue>
    </source>
</reference>
<reference key="2">
    <citation type="journal article" date="2004" name="Nat. Genet.">
        <title>Complete sequencing and characterization of 21,243 full-length human cDNAs.</title>
        <authorList>
            <person name="Ota T."/>
            <person name="Suzuki Y."/>
            <person name="Nishikawa T."/>
            <person name="Otsuki T."/>
            <person name="Sugiyama T."/>
            <person name="Irie R."/>
            <person name="Wakamatsu A."/>
            <person name="Hayashi K."/>
            <person name="Sato H."/>
            <person name="Nagai K."/>
            <person name="Kimura K."/>
            <person name="Makita H."/>
            <person name="Sekine M."/>
            <person name="Obayashi M."/>
            <person name="Nishi T."/>
            <person name="Shibahara T."/>
            <person name="Tanaka T."/>
            <person name="Ishii S."/>
            <person name="Yamamoto J."/>
            <person name="Saito K."/>
            <person name="Kawai Y."/>
            <person name="Isono Y."/>
            <person name="Nakamura Y."/>
            <person name="Nagahari K."/>
            <person name="Murakami K."/>
            <person name="Yasuda T."/>
            <person name="Iwayanagi T."/>
            <person name="Wagatsuma M."/>
            <person name="Shiratori A."/>
            <person name="Sudo H."/>
            <person name="Hosoiri T."/>
            <person name="Kaku Y."/>
            <person name="Kodaira H."/>
            <person name="Kondo H."/>
            <person name="Sugawara M."/>
            <person name="Takahashi M."/>
            <person name="Kanda K."/>
            <person name="Yokoi T."/>
            <person name="Furuya T."/>
            <person name="Kikkawa E."/>
            <person name="Omura Y."/>
            <person name="Abe K."/>
            <person name="Kamihara K."/>
            <person name="Katsuta N."/>
            <person name="Sato K."/>
            <person name="Tanikawa M."/>
            <person name="Yamazaki M."/>
            <person name="Ninomiya K."/>
            <person name="Ishibashi T."/>
            <person name="Yamashita H."/>
            <person name="Murakawa K."/>
            <person name="Fujimori K."/>
            <person name="Tanai H."/>
            <person name="Kimata M."/>
            <person name="Watanabe M."/>
            <person name="Hiraoka S."/>
            <person name="Chiba Y."/>
            <person name="Ishida S."/>
            <person name="Ono Y."/>
            <person name="Takiguchi S."/>
            <person name="Watanabe S."/>
            <person name="Yosida M."/>
            <person name="Hotuta T."/>
            <person name="Kusano J."/>
            <person name="Kanehori K."/>
            <person name="Takahashi-Fujii A."/>
            <person name="Hara H."/>
            <person name="Tanase T.-O."/>
            <person name="Nomura Y."/>
            <person name="Togiya S."/>
            <person name="Komai F."/>
            <person name="Hara R."/>
            <person name="Takeuchi K."/>
            <person name="Arita M."/>
            <person name="Imose N."/>
            <person name="Musashino K."/>
            <person name="Yuuki H."/>
            <person name="Oshima A."/>
            <person name="Sasaki N."/>
            <person name="Aotsuka S."/>
            <person name="Yoshikawa Y."/>
            <person name="Matsunawa H."/>
            <person name="Ichihara T."/>
            <person name="Shiohata N."/>
            <person name="Sano S."/>
            <person name="Moriya S."/>
            <person name="Momiyama H."/>
            <person name="Satoh N."/>
            <person name="Takami S."/>
            <person name="Terashima Y."/>
            <person name="Suzuki O."/>
            <person name="Nakagawa S."/>
            <person name="Senoh A."/>
            <person name="Mizoguchi H."/>
            <person name="Goto Y."/>
            <person name="Shimizu F."/>
            <person name="Wakebe H."/>
            <person name="Hishigaki H."/>
            <person name="Watanabe T."/>
            <person name="Sugiyama A."/>
            <person name="Takemoto M."/>
            <person name="Kawakami B."/>
            <person name="Yamazaki M."/>
            <person name="Watanabe K."/>
            <person name="Kumagai A."/>
            <person name="Itakura S."/>
            <person name="Fukuzumi Y."/>
            <person name="Fujimori Y."/>
            <person name="Komiyama M."/>
            <person name="Tashiro H."/>
            <person name="Tanigami A."/>
            <person name="Fujiwara T."/>
            <person name="Ono T."/>
            <person name="Yamada K."/>
            <person name="Fujii Y."/>
            <person name="Ozaki K."/>
            <person name="Hirao M."/>
            <person name="Ohmori Y."/>
            <person name="Kawabata A."/>
            <person name="Hikiji T."/>
            <person name="Kobatake N."/>
            <person name="Inagaki H."/>
            <person name="Ikema Y."/>
            <person name="Okamoto S."/>
            <person name="Okitani R."/>
            <person name="Kawakami T."/>
            <person name="Noguchi S."/>
            <person name="Itoh T."/>
            <person name="Shigeta K."/>
            <person name="Senba T."/>
            <person name="Matsumura K."/>
            <person name="Nakajima Y."/>
            <person name="Mizuno T."/>
            <person name="Morinaga M."/>
            <person name="Sasaki M."/>
            <person name="Togashi T."/>
            <person name="Oyama M."/>
            <person name="Hata H."/>
            <person name="Watanabe M."/>
            <person name="Komatsu T."/>
            <person name="Mizushima-Sugano J."/>
            <person name="Satoh T."/>
            <person name="Shirai Y."/>
            <person name="Takahashi Y."/>
            <person name="Nakagawa K."/>
            <person name="Okumura K."/>
            <person name="Nagase T."/>
            <person name="Nomura N."/>
            <person name="Kikuchi H."/>
            <person name="Masuho Y."/>
            <person name="Yamashita R."/>
            <person name="Nakai K."/>
            <person name="Yada T."/>
            <person name="Nakamura Y."/>
            <person name="Ohara O."/>
            <person name="Isogai T."/>
            <person name="Sugano S."/>
        </authorList>
    </citation>
    <scope>NUCLEOTIDE SEQUENCE [LARGE SCALE MRNA] (ISOFORM 1)</scope>
    <source>
        <tissue>Uterus</tissue>
    </source>
</reference>
<reference key="3">
    <citation type="journal article" date="2004" name="Genome Res.">
        <title>The status, quality, and expansion of the NIH full-length cDNA project: the Mammalian Gene Collection (MGC).</title>
        <authorList>
            <consortium name="The MGC Project Team"/>
        </authorList>
    </citation>
    <scope>NUCLEOTIDE SEQUENCE [LARGE SCALE MRNA] (ISOFORM 2)</scope>
</reference>
<reference evidence="8 9 10" key="4">
    <citation type="journal article" date="2017" name="Proc. Natl. Acad. Sci. U.S.A.">
        <title>Structural insights into binding of STAC proteins to voltage-gated calcium channels.</title>
        <authorList>
            <person name="Wong King Yuen S.M."/>
            <person name="Campiglio M."/>
            <person name="Tung C.C."/>
            <person name="Flucher B.E."/>
            <person name="Van Petegem F."/>
        </authorList>
    </citation>
    <scope>X-RAY CRYSTALLOGRAPHY (1.20 ANGSTROMS) OF 296-411 IN COMPLEX WITH CACNA1S PEPTIDE</scope>
    <scope>INTERACTION WITH CACNA1S AND CACNA1C</scope>
    <scope>MUTAGENESIS OF GLN-306; TRP-329 AND GLN-347</scope>
</reference>
<evidence type="ECO:0000250" key="1">
    <source>
        <dbReference type="UniProtKB" id="Q8R1B0"/>
    </source>
</evidence>
<evidence type="ECO:0000255" key="2">
    <source>
        <dbReference type="PROSITE-ProRule" id="PRU00192"/>
    </source>
</evidence>
<evidence type="ECO:0000255" key="3">
    <source>
        <dbReference type="PROSITE-ProRule" id="PRU00226"/>
    </source>
</evidence>
<evidence type="ECO:0000256" key="4">
    <source>
        <dbReference type="SAM" id="MobiDB-lite"/>
    </source>
</evidence>
<evidence type="ECO:0000269" key="5">
    <source>
    </source>
</evidence>
<evidence type="ECO:0000303" key="6">
    <source>
    </source>
</evidence>
<evidence type="ECO:0000303" key="7">
    <source>
    </source>
</evidence>
<evidence type="ECO:0007744" key="8">
    <source>
        <dbReference type="PDB" id="6B26"/>
    </source>
</evidence>
<evidence type="ECO:0007744" key="9">
    <source>
        <dbReference type="PDB" id="6B27"/>
    </source>
</evidence>
<evidence type="ECO:0007744" key="10">
    <source>
        <dbReference type="PDB" id="6B28"/>
    </source>
</evidence>
<evidence type="ECO:0007829" key="11">
    <source>
        <dbReference type="PDB" id="6B26"/>
    </source>
</evidence>
<accession>Q6ZMT1</accession>
<accession>Q32MA3</accession>
<gene>
    <name type="primary">STAC2</name>
</gene>
<feature type="chain" id="PRO_0000274413" description="SH3 and cysteine-rich domain-containing protein 2">
    <location>
        <begin position="1"/>
        <end position="411"/>
    </location>
</feature>
<feature type="domain" description="SH3 1" evidence="2">
    <location>
        <begin position="292"/>
        <end position="351"/>
    </location>
</feature>
<feature type="domain" description="SH3 2" evidence="2">
    <location>
        <begin position="354"/>
        <end position="411"/>
    </location>
</feature>
<feature type="zinc finger region" description="Phorbol-ester/DAG-type" evidence="3">
    <location>
        <begin position="110"/>
        <end position="161"/>
    </location>
</feature>
<feature type="region of interest" description="Disordered" evidence="4">
    <location>
        <begin position="1"/>
        <end position="29"/>
    </location>
</feature>
<feature type="region of interest" description="Disordered" evidence="4">
    <location>
        <begin position="64"/>
        <end position="95"/>
    </location>
</feature>
<feature type="region of interest" description="Disordered" evidence="4">
    <location>
        <begin position="174"/>
        <end position="203"/>
    </location>
</feature>
<feature type="region of interest" description="Disordered" evidence="4">
    <location>
        <begin position="219"/>
        <end position="288"/>
    </location>
</feature>
<feature type="compositionally biased region" description="Polar residues" evidence="4">
    <location>
        <begin position="19"/>
        <end position="29"/>
    </location>
</feature>
<feature type="compositionally biased region" description="Pro residues" evidence="4">
    <location>
        <begin position="70"/>
        <end position="82"/>
    </location>
</feature>
<feature type="compositionally biased region" description="Low complexity" evidence="4">
    <location>
        <begin position="219"/>
        <end position="232"/>
    </location>
</feature>
<feature type="modified residue" description="Phosphoserine" evidence="1">
    <location>
        <position position="48"/>
    </location>
</feature>
<feature type="splice variant" id="VSP_022742" description="In isoform 2." evidence="7">
    <location>
        <begin position="1"/>
        <end position="142"/>
    </location>
</feature>
<feature type="mutagenesis site" description="Mildly decreased affinity for CACNA1S." evidence="5">
    <original>Q</original>
    <variation>L</variation>
    <location>
        <position position="306"/>
    </location>
</feature>
<feature type="mutagenesis site" description="Loss of interaction with CACNA1S." evidence="5">
    <original>W</original>
    <variation>S</variation>
    <location>
        <position position="329"/>
    </location>
</feature>
<feature type="mutagenesis site" description="No effect on the structure of the two SH3 domains." evidence="5">
    <original>Q</original>
    <variation>I</variation>
    <location>
        <position position="347"/>
    </location>
</feature>
<feature type="strand" evidence="11">
    <location>
        <begin position="296"/>
        <end position="299"/>
    </location>
</feature>
<feature type="strand" evidence="11">
    <location>
        <begin position="318"/>
        <end position="323"/>
    </location>
</feature>
<feature type="strand" evidence="11">
    <location>
        <begin position="326"/>
        <end position="334"/>
    </location>
</feature>
<feature type="strand" evidence="11">
    <location>
        <begin position="337"/>
        <end position="342"/>
    </location>
</feature>
<feature type="helix" evidence="11">
    <location>
        <begin position="343"/>
        <end position="345"/>
    </location>
</feature>
<feature type="strand" evidence="11">
    <location>
        <begin position="346"/>
        <end position="348"/>
    </location>
</feature>
<feature type="strand" evidence="11">
    <location>
        <begin position="354"/>
        <end position="360"/>
    </location>
</feature>
<feature type="helix" evidence="11">
    <location>
        <begin position="366"/>
        <end position="368"/>
    </location>
</feature>
<feature type="strand" evidence="11">
    <location>
        <begin position="378"/>
        <end position="381"/>
    </location>
</feature>
<feature type="helix" evidence="11">
    <location>
        <begin position="383"/>
        <end position="385"/>
    </location>
</feature>
<feature type="strand" evidence="11">
    <location>
        <begin position="390"/>
        <end position="396"/>
    </location>
</feature>
<feature type="strand" evidence="11">
    <location>
        <begin position="399"/>
        <end position="404"/>
    </location>
</feature>
<feature type="helix" evidence="11">
    <location>
        <begin position="405"/>
        <end position="407"/>
    </location>
</feature>
<feature type="strand" evidence="11">
    <location>
        <begin position="408"/>
        <end position="410"/>
    </location>
</feature>
<keyword id="KW-0002">3D-structure</keyword>
<keyword id="KW-0025">Alternative splicing</keyword>
<keyword id="KW-1003">Cell membrane</keyword>
<keyword id="KW-0963">Cytoplasm</keyword>
<keyword id="KW-0472">Membrane</keyword>
<keyword id="KW-0479">Metal-binding</keyword>
<keyword id="KW-0597">Phosphoprotein</keyword>
<keyword id="KW-1267">Proteomics identification</keyword>
<keyword id="KW-1185">Reference proteome</keyword>
<keyword id="KW-0677">Repeat</keyword>
<keyword id="KW-0728">SH3 domain</keyword>
<keyword id="KW-0862">Zinc</keyword>
<keyword id="KW-0863">Zinc-finger</keyword>
<dbReference type="EMBL" id="AJ608762">
    <property type="protein sequence ID" value="CAE75539.1"/>
    <property type="molecule type" value="mRNA"/>
</dbReference>
<dbReference type="EMBL" id="AK131500">
    <property type="protein sequence ID" value="BAD18644.1"/>
    <property type="molecule type" value="mRNA"/>
</dbReference>
<dbReference type="EMBL" id="BC109231">
    <property type="protein sequence ID" value="AAI09232.1"/>
    <property type="molecule type" value="mRNA"/>
</dbReference>
<dbReference type="CCDS" id="CCDS11335.1">
    <molecule id="Q6ZMT1-1"/>
</dbReference>
<dbReference type="RefSeq" id="NP_001338289.1">
    <molecule id="Q6ZMT1-2"/>
    <property type="nucleotide sequence ID" value="NM_001351360.2"/>
</dbReference>
<dbReference type="RefSeq" id="NP_945344.1">
    <molecule id="Q6ZMT1-1"/>
    <property type="nucleotide sequence ID" value="NM_198993.5"/>
</dbReference>
<dbReference type="PDB" id="6B26">
    <property type="method" value="X-ray"/>
    <property type="resolution" value="1.20 A"/>
    <property type="chains" value="A=296-411"/>
</dbReference>
<dbReference type="PDB" id="6B27">
    <property type="method" value="X-ray"/>
    <property type="resolution" value="1.73 A"/>
    <property type="chains" value="A/B/C/D/E/F=296-411"/>
</dbReference>
<dbReference type="PDB" id="6B28">
    <property type="method" value="X-ray"/>
    <property type="resolution" value="2.55 A"/>
    <property type="chains" value="A=296-411"/>
</dbReference>
<dbReference type="PDBsum" id="6B26"/>
<dbReference type="PDBsum" id="6B27"/>
<dbReference type="PDBsum" id="6B28"/>
<dbReference type="SMR" id="Q6ZMT1"/>
<dbReference type="BioGRID" id="131192">
    <property type="interactions" value="20"/>
</dbReference>
<dbReference type="FunCoup" id="Q6ZMT1">
    <property type="interactions" value="3"/>
</dbReference>
<dbReference type="IntAct" id="Q6ZMT1">
    <property type="interactions" value="15"/>
</dbReference>
<dbReference type="STRING" id="9606.ENSP00000327509"/>
<dbReference type="GlyGen" id="Q6ZMT1">
    <property type="glycosylation" value="1 site"/>
</dbReference>
<dbReference type="iPTMnet" id="Q6ZMT1"/>
<dbReference type="PhosphoSitePlus" id="Q6ZMT1"/>
<dbReference type="BioMuta" id="STAC2"/>
<dbReference type="DMDM" id="74749556"/>
<dbReference type="MassIVE" id="Q6ZMT1"/>
<dbReference type="PaxDb" id="9606-ENSP00000327509"/>
<dbReference type="PeptideAtlas" id="Q6ZMT1"/>
<dbReference type="ProteomicsDB" id="67911">
    <molecule id="Q6ZMT1-1"/>
</dbReference>
<dbReference type="ProteomicsDB" id="67912">
    <molecule id="Q6ZMT1-2"/>
</dbReference>
<dbReference type="Pumba" id="Q6ZMT1"/>
<dbReference type="Antibodypedia" id="2798">
    <property type="antibodies" value="155 antibodies from 26 providers"/>
</dbReference>
<dbReference type="DNASU" id="342667"/>
<dbReference type="Ensembl" id="ENST00000333461.6">
    <molecule id="Q6ZMT1-1"/>
    <property type="protein sequence ID" value="ENSP00000327509.5"/>
    <property type="gene ID" value="ENSG00000141750.7"/>
</dbReference>
<dbReference type="GeneID" id="342667"/>
<dbReference type="KEGG" id="hsa:342667"/>
<dbReference type="MANE-Select" id="ENST00000333461.6">
    <property type="protein sequence ID" value="ENSP00000327509.5"/>
    <property type="RefSeq nucleotide sequence ID" value="NM_198993.5"/>
    <property type="RefSeq protein sequence ID" value="NP_945344.1"/>
</dbReference>
<dbReference type="UCSC" id="uc002hrs.4">
    <molecule id="Q6ZMT1-1"/>
    <property type="organism name" value="human"/>
</dbReference>
<dbReference type="AGR" id="HGNC:23990"/>
<dbReference type="CTD" id="342667"/>
<dbReference type="DisGeNET" id="342667"/>
<dbReference type="GeneCards" id="STAC2"/>
<dbReference type="HGNC" id="HGNC:23990">
    <property type="gene designation" value="STAC2"/>
</dbReference>
<dbReference type="HPA" id="ENSG00000141750">
    <property type="expression patterns" value="Tissue enhanced (brain, breast, retina, skin)"/>
</dbReference>
<dbReference type="neXtProt" id="NX_Q6ZMT1"/>
<dbReference type="OpenTargets" id="ENSG00000141750"/>
<dbReference type="PharmGKB" id="PA134939947"/>
<dbReference type="VEuPathDB" id="HostDB:ENSG00000141750"/>
<dbReference type="eggNOG" id="ENOG502QW9G">
    <property type="taxonomic scope" value="Eukaryota"/>
</dbReference>
<dbReference type="GeneTree" id="ENSGT00950000183092"/>
<dbReference type="HOGENOM" id="CLU_048120_0_0_1"/>
<dbReference type="InParanoid" id="Q6ZMT1"/>
<dbReference type="OMA" id="QQACNGK"/>
<dbReference type="OrthoDB" id="9991832at2759"/>
<dbReference type="PAN-GO" id="Q6ZMT1">
    <property type="GO annotations" value="4 GO annotations based on evolutionary models"/>
</dbReference>
<dbReference type="PhylomeDB" id="Q6ZMT1"/>
<dbReference type="TreeFam" id="TF332878"/>
<dbReference type="PathwayCommons" id="Q6ZMT1"/>
<dbReference type="SignaLink" id="Q6ZMT1"/>
<dbReference type="BioGRID-ORCS" id="342667">
    <property type="hits" value="13 hits in 1138 CRISPR screens"/>
</dbReference>
<dbReference type="ChiTaRS" id="STAC2">
    <property type="organism name" value="human"/>
</dbReference>
<dbReference type="GenomeRNAi" id="342667"/>
<dbReference type="Pharos" id="Q6ZMT1">
    <property type="development level" value="Tbio"/>
</dbReference>
<dbReference type="PRO" id="PR:Q6ZMT1"/>
<dbReference type="Proteomes" id="UP000005640">
    <property type="component" value="Chromosome 17"/>
</dbReference>
<dbReference type="RNAct" id="Q6ZMT1">
    <property type="molecule type" value="protein"/>
</dbReference>
<dbReference type="Bgee" id="ENSG00000141750">
    <property type="expression patterns" value="Expressed in popliteal artery and 124 other cell types or tissues"/>
</dbReference>
<dbReference type="ExpressionAtlas" id="Q6ZMT1">
    <property type="expression patterns" value="baseline and differential"/>
</dbReference>
<dbReference type="GO" id="GO:0009898">
    <property type="term" value="C:cytoplasmic side of plasma membrane"/>
    <property type="evidence" value="ECO:0000250"/>
    <property type="project" value="UniProtKB"/>
</dbReference>
<dbReference type="GO" id="GO:0005829">
    <property type="term" value="C:cytosol"/>
    <property type="evidence" value="ECO:0007669"/>
    <property type="project" value="UniProtKB-SubCell"/>
</dbReference>
<dbReference type="GO" id="GO:0042383">
    <property type="term" value="C:sarcolemma"/>
    <property type="evidence" value="ECO:0007669"/>
    <property type="project" value="UniProtKB-SubCell"/>
</dbReference>
<dbReference type="GO" id="GO:0008270">
    <property type="term" value="F:zinc ion binding"/>
    <property type="evidence" value="ECO:0007669"/>
    <property type="project" value="UniProtKB-KW"/>
</dbReference>
<dbReference type="GO" id="GO:1903078">
    <property type="term" value="P:positive regulation of protein localization to plasma membrane"/>
    <property type="evidence" value="ECO:0000250"/>
    <property type="project" value="UniProtKB"/>
</dbReference>
<dbReference type="GO" id="GO:1901387">
    <property type="term" value="P:positive regulation of voltage-gated calcium channel activity"/>
    <property type="evidence" value="ECO:0000250"/>
    <property type="project" value="UniProtKB"/>
</dbReference>
<dbReference type="GO" id="GO:0003009">
    <property type="term" value="P:skeletal muscle contraction"/>
    <property type="evidence" value="ECO:0000318"/>
    <property type="project" value="GO_Central"/>
</dbReference>
<dbReference type="CDD" id="cd20881">
    <property type="entry name" value="C1_Stac2"/>
    <property type="match status" value="1"/>
</dbReference>
<dbReference type="CDD" id="cd11985">
    <property type="entry name" value="SH3_Stac2_C"/>
    <property type="match status" value="1"/>
</dbReference>
<dbReference type="FunFam" id="2.30.30.40:FF:000073">
    <property type="entry name" value="SH3 and cysteine-rich domain-containing protein 2"/>
    <property type="match status" value="1"/>
</dbReference>
<dbReference type="FunFam" id="3.30.60.20:FF:000022">
    <property type="entry name" value="SH3 and cysteine-rich domain-containing protein 3 isoform 2"/>
    <property type="match status" value="1"/>
</dbReference>
<dbReference type="Gene3D" id="3.30.60.20">
    <property type="match status" value="1"/>
</dbReference>
<dbReference type="Gene3D" id="2.30.30.40">
    <property type="entry name" value="SH3 Domains"/>
    <property type="match status" value="1"/>
</dbReference>
<dbReference type="InterPro" id="IPR046349">
    <property type="entry name" value="C1-like_sf"/>
</dbReference>
<dbReference type="InterPro" id="IPR002219">
    <property type="entry name" value="PE/DAG-bd"/>
</dbReference>
<dbReference type="InterPro" id="IPR036028">
    <property type="entry name" value="SH3-like_dom_sf"/>
</dbReference>
<dbReference type="InterPro" id="IPR001452">
    <property type="entry name" value="SH3_domain"/>
</dbReference>
<dbReference type="InterPro" id="IPR039688">
    <property type="entry name" value="STAC1/2/3"/>
</dbReference>
<dbReference type="InterPro" id="IPR035509">
    <property type="entry name" value="Stac2_SH3"/>
</dbReference>
<dbReference type="PANTHER" id="PTHR15135:SF5">
    <property type="entry name" value="SH3 AND CYSTEINE-RICH DOMAIN-CONTAINING PROTEIN 2"/>
    <property type="match status" value="1"/>
</dbReference>
<dbReference type="PANTHER" id="PTHR15135">
    <property type="entry name" value="STAC"/>
    <property type="match status" value="1"/>
</dbReference>
<dbReference type="Pfam" id="PF00130">
    <property type="entry name" value="C1_1"/>
    <property type="match status" value="1"/>
</dbReference>
<dbReference type="Pfam" id="PF07653">
    <property type="entry name" value="SH3_2"/>
    <property type="match status" value="1"/>
</dbReference>
<dbReference type="Pfam" id="PF14604">
    <property type="entry name" value="SH3_9"/>
    <property type="match status" value="1"/>
</dbReference>
<dbReference type="Pfam" id="PF16664">
    <property type="entry name" value="STAC2_u1"/>
    <property type="match status" value="1"/>
</dbReference>
<dbReference type="PRINTS" id="PR00499">
    <property type="entry name" value="P67PHOX"/>
</dbReference>
<dbReference type="PRINTS" id="PR00452">
    <property type="entry name" value="SH3DOMAIN"/>
</dbReference>
<dbReference type="SMART" id="SM00109">
    <property type="entry name" value="C1"/>
    <property type="match status" value="1"/>
</dbReference>
<dbReference type="SMART" id="SM00326">
    <property type="entry name" value="SH3"/>
    <property type="match status" value="1"/>
</dbReference>
<dbReference type="SUPFAM" id="SSF57889">
    <property type="entry name" value="Cysteine-rich domain"/>
    <property type="match status" value="1"/>
</dbReference>
<dbReference type="SUPFAM" id="SSF50044">
    <property type="entry name" value="SH3-domain"/>
    <property type="match status" value="1"/>
</dbReference>
<dbReference type="PROSITE" id="PS50002">
    <property type="entry name" value="SH3"/>
    <property type="match status" value="2"/>
</dbReference>
<dbReference type="PROSITE" id="PS00479">
    <property type="entry name" value="ZF_DAG_PE_1"/>
    <property type="match status" value="1"/>
</dbReference>
<dbReference type="PROSITE" id="PS50081">
    <property type="entry name" value="ZF_DAG_PE_2"/>
    <property type="match status" value="1"/>
</dbReference>
<comment type="function">
    <text evidence="1">Plays a redundant role in promoting the expression of calcium channel CACNA1S at the cell membrane, and thereby contributes to increased channel activity. Slows down the inactivation rate of the calcium channel CACNA1C.</text>
</comment>
<comment type="subunit">
    <text evidence="5">Interacts (via SH3 domains) with CACNA1S (PubMed:29078335). Interacts (via SH3 domains) with CACNA1C (PubMed:29078335). Has much lower affinity for CACNA1C than for CACNA1S (PubMed:29078335).</text>
</comment>
<comment type="interaction">
    <interactant intactId="EBI-948802">
        <id>Q6ZMT1</id>
    </interactant>
    <interactant intactId="EBI-930964">
        <id>P54253</id>
        <label>ATXN1</label>
    </interactant>
    <organismsDiffer>false</organismsDiffer>
    <experiments>4</experiments>
</comment>
<comment type="interaction">
    <interactant intactId="EBI-948802">
        <id>Q6ZMT1</id>
    </interactant>
    <interactant intactId="EBI-739832">
        <id>Q8TBB1</id>
        <label>LNX1</label>
    </interactant>
    <organismsDiffer>false</organismsDiffer>
    <experiments>3</experiments>
</comment>
<comment type="interaction">
    <interactant intactId="EBI-948802">
        <id>Q6ZMT1</id>
    </interactant>
    <interactant intactId="EBI-1383852">
        <id>P54646</id>
        <label>PRKAA2</label>
    </interactant>
    <organismsDiffer>false</organismsDiffer>
    <experiments>3</experiments>
</comment>
<comment type="subcellular location">
    <subcellularLocation>
        <location evidence="1">Cytoplasm</location>
        <location evidence="1">Cytosol</location>
    </subcellularLocation>
    <subcellularLocation>
        <location evidence="1">Cell membrane</location>
        <topology evidence="1">Peripheral membrane protein</topology>
        <orientation evidence="1">Cytoplasmic side</orientation>
    </subcellularLocation>
    <subcellularLocation>
        <location evidence="1">Cell membrane</location>
        <location evidence="1">Sarcolemma</location>
        <topology evidence="1">Peripheral membrane protein</topology>
        <orientation evidence="1">Cytoplasmic side</orientation>
    </subcellularLocation>
    <text evidence="1">Colocalizes with CACNA1C at the plasma membrane of transfected cells.</text>
</comment>
<comment type="alternative products">
    <event type="alternative splicing"/>
    <isoform>
        <id>Q6ZMT1-1</id>
        <name>1</name>
        <sequence type="displayed"/>
    </isoform>
    <isoform>
        <id>Q6ZMT1-2</id>
        <name>2</name>
        <sequence type="described" ref="VSP_022742"/>
    </isoform>
</comment>
<name>STAC2_HUMAN</name>
<protein>
    <recommendedName>
        <fullName>SH3 and cysteine-rich domain-containing protein 2</fullName>
    </recommendedName>
    <alternativeName>
        <fullName evidence="6">24b2/STAC2</fullName>
    </alternativeName>
    <alternativeName>
        <fullName>Src homology 3 and cysteine-rich domain-containing protein 2</fullName>
    </alternativeName>
</protein>
<sequence length="411" mass="45009">MTEMSEKENEPDDAATHSPPGTVSALQETKLQRFKRSLSLKTILRSKSLENFFLRSGSELKCPTEVLLTPPTPLPPPSPPPTASDRGLATPSPSPCPVPRPLAALKPVRLHSFQEHVFKRASPCELCHQLIVGNSKQGLRCKMCKVSVHLWCSEEISHQQCPGKTSTSFRRNFSSPLLVHEPPPVCATSKESPPTGDSGKVDPVYETLRYGTSLALMNRSSFSSTSESPTRSLSERDELTEDGEGSIRSSEEGPGDSASPVFTAPAESEGPGPEEKSPGQQLPKATLRKDVGPMYSYVALYKFLPQENNDLALQPGDRIMLVDDSNEDWWKGKIGDRVGFFPANFVQRVRPGENVWRCCQPFSGNKEQGYMSLKENQICVGVGRSKDADGFIRVSSGKKRGLVPVDALTEI</sequence>
<organism>
    <name type="scientific">Homo sapiens</name>
    <name type="common">Human</name>
    <dbReference type="NCBI Taxonomy" id="9606"/>
    <lineage>
        <taxon>Eukaryota</taxon>
        <taxon>Metazoa</taxon>
        <taxon>Chordata</taxon>
        <taxon>Craniata</taxon>
        <taxon>Vertebrata</taxon>
        <taxon>Euteleostomi</taxon>
        <taxon>Mammalia</taxon>
        <taxon>Eutheria</taxon>
        <taxon>Euarchontoglires</taxon>
        <taxon>Primates</taxon>
        <taxon>Haplorrhini</taxon>
        <taxon>Catarrhini</taxon>
        <taxon>Hominidae</taxon>
        <taxon>Homo</taxon>
    </lineage>
</organism>